<protein>
    <recommendedName>
        <fullName>Alkyl hydroperoxide reductase subunit F</fullName>
        <ecNumber>1.8.1.-</ecNumber>
    </recommendedName>
</protein>
<evidence type="ECO:0000250" key="1"/>
<evidence type="ECO:0000305" key="2"/>
<organism>
    <name type="scientific">Staphylococcus aureus (strain MSSA476)</name>
    <dbReference type="NCBI Taxonomy" id="282459"/>
    <lineage>
        <taxon>Bacteria</taxon>
        <taxon>Bacillati</taxon>
        <taxon>Bacillota</taxon>
        <taxon>Bacilli</taxon>
        <taxon>Bacillales</taxon>
        <taxon>Staphylococcaceae</taxon>
        <taxon>Staphylococcus</taxon>
    </lineage>
</organism>
<comment type="function">
    <text evidence="1">Serves to protect the cell against DNA damage by alkyl hydroperoxides. It can use either NADH or NADPH as electron donor for direct reduction of redox dyes or of alkyl hydroperoxides when combined with the AhpC protein (By similarity).</text>
</comment>
<comment type="cofactor">
    <cofactor evidence="1">
        <name>FAD</name>
        <dbReference type="ChEBI" id="CHEBI:57692"/>
    </cofactor>
    <text evidence="1">Binds 1 FAD per subunit.</text>
</comment>
<comment type="subunit">
    <text evidence="1">Homodimer.</text>
</comment>
<comment type="miscellaneous">
    <text>The active site is a redox-active disulfide bond.</text>
</comment>
<comment type="similarity">
    <text evidence="2">Belongs to the class-II pyridine nucleotide-disulfide oxidoreductase family.</text>
</comment>
<feature type="chain" id="PRO_0000166782" description="Alkyl hydroperoxide reductase subunit F">
    <location>
        <begin position="1"/>
        <end position="507"/>
    </location>
</feature>
<feature type="binding site" evidence="1">
    <location>
        <begin position="207"/>
        <end position="222"/>
    </location>
    <ligand>
        <name>FAD</name>
        <dbReference type="ChEBI" id="CHEBI:57692"/>
    </ligand>
</feature>
<feature type="binding site" evidence="1">
    <location>
        <begin position="347"/>
        <end position="361"/>
    </location>
    <ligand>
        <name>NAD(+)</name>
        <dbReference type="ChEBI" id="CHEBI:57540"/>
    </ligand>
</feature>
<feature type="binding site" evidence="1">
    <location>
        <begin position="467"/>
        <end position="477"/>
    </location>
    <ligand>
        <name>FAD</name>
        <dbReference type="ChEBI" id="CHEBI:57692"/>
    </ligand>
</feature>
<feature type="disulfide bond" description="Redox-active" evidence="1">
    <location>
        <begin position="335"/>
        <end position="338"/>
    </location>
</feature>
<keyword id="KW-1015">Disulfide bond</keyword>
<keyword id="KW-0274">FAD</keyword>
<keyword id="KW-0285">Flavoprotein</keyword>
<keyword id="KW-0520">NAD</keyword>
<keyword id="KW-0521">NADP</keyword>
<keyword id="KW-0560">Oxidoreductase</keyword>
<keyword id="KW-0676">Redox-active center</keyword>
<accession>Q6GC92</accession>
<sequence length="507" mass="54655">MLNADLKQQLKQLLELMEGNVEFVASLGSDEKSKELKELLTEISDMSPRLSLSEKSLKRTPSFSVNRPGEETGVTFAGIPLGHEFNSLVLAILQVSGRAPKEKQSIIDQIKNLEGSFHFETFISLTCQKCPDVVQALNLMSVINPNITHSMIDGAVFREESENIMAVPAVFLNGEEFGNGRMTIQDILSKLGSTADASEFENKEPYDVLIVGGGPASGSAAIYTARKGLRTGIVADRIGGQVNDTAGIENFITVKETTGSEFSSNLAAHIDQYDIDAMTGIRATDIEKTDEAIKVTLENGAVLESKTVIIATGAGWRKLNIPGEEQLINKGVAFCPHCDGPLFENKDVAVIGGGNSGVEAAIDLAGIVNHVTLFEFASELKADNVLQDRLRSLSNVDIKTNAKTTEVVGEDHVTGIRYEDMSTGEEHLLNLDGIFVQIGLLPNTSWLKDAVELNERGEIVIDCNNNTNVPGIFAAGDVTDQKNKQIIISMGAGANAALNAFDYIIRN</sequence>
<name>AHPF_STAAS</name>
<proteinExistence type="inferred from homology"/>
<dbReference type="EC" id="1.8.1.-"/>
<dbReference type="EMBL" id="BX571857">
    <property type="protein sequence ID" value="CAG42128.1"/>
    <property type="molecule type" value="Genomic_DNA"/>
</dbReference>
<dbReference type="RefSeq" id="WP_000930512.1">
    <property type="nucleotide sequence ID" value="NC_002953.3"/>
</dbReference>
<dbReference type="SMR" id="Q6GC92"/>
<dbReference type="KEGG" id="sas:SAS0357"/>
<dbReference type="HOGENOM" id="CLU_031864_4_2_9"/>
<dbReference type="GO" id="GO:0050660">
    <property type="term" value="F:flavin adenine dinucleotide binding"/>
    <property type="evidence" value="ECO:0007669"/>
    <property type="project" value="InterPro"/>
</dbReference>
<dbReference type="GO" id="GO:0051287">
    <property type="term" value="F:NAD binding"/>
    <property type="evidence" value="ECO:0007669"/>
    <property type="project" value="InterPro"/>
</dbReference>
<dbReference type="GO" id="GO:0102039">
    <property type="term" value="F:NADH-dependent peroxiredoxin activity"/>
    <property type="evidence" value="ECO:0007669"/>
    <property type="project" value="InterPro"/>
</dbReference>
<dbReference type="GO" id="GO:0016668">
    <property type="term" value="F:oxidoreductase activity, acting on a sulfur group of donors, NAD(P) as acceptor"/>
    <property type="evidence" value="ECO:0007669"/>
    <property type="project" value="UniProtKB-ARBA"/>
</dbReference>
<dbReference type="GO" id="GO:0000302">
    <property type="term" value="P:response to reactive oxygen species"/>
    <property type="evidence" value="ECO:0007669"/>
    <property type="project" value="InterPro"/>
</dbReference>
<dbReference type="CDD" id="cd03026">
    <property type="entry name" value="AhpF_NTD_C"/>
    <property type="match status" value="1"/>
</dbReference>
<dbReference type="CDD" id="cd02974">
    <property type="entry name" value="AhpF_NTD_N"/>
    <property type="match status" value="1"/>
</dbReference>
<dbReference type="FunFam" id="3.50.50.60:FF:000007">
    <property type="entry name" value="Alkyl hydroperoxide reductase, F subunit"/>
    <property type="match status" value="1"/>
</dbReference>
<dbReference type="Gene3D" id="3.40.30.80">
    <property type="match status" value="1"/>
</dbReference>
<dbReference type="Gene3D" id="3.50.50.60">
    <property type="entry name" value="FAD/NAD(P)-binding domain"/>
    <property type="match status" value="2"/>
</dbReference>
<dbReference type="InterPro" id="IPR044141">
    <property type="entry name" value="AhpF_NTD_C"/>
</dbReference>
<dbReference type="InterPro" id="IPR044142">
    <property type="entry name" value="AhpF_NTD_N"/>
</dbReference>
<dbReference type="InterPro" id="IPR012081">
    <property type="entry name" value="Alkyl_hydroperoxide_Rdtase_suF"/>
</dbReference>
<dbReference type="InterPro" id="IPR036188">
    <property type="entry name" value="FAD/NAD-bd_sf"/>
</dbReference>
<dbReference type="InterPro" id="IPR023753">
    <property type="entry name" value="FAD/NAD-binding_dom"/>
</dbReference>
<dbReference type="InterPro" id="IPR050097">
    <property type="entry name" value="Ferredoxin-NADP_redctase_2"/>
</dbReference>
<dbReference type="InterPro" id="IPR008255">
    <property type="entry name" value="Pyr_nucl-diS_OxRdtase_2_AS"/>
</dbReference>
<dbReference type="InterPro" id="IPR012336">
    <property type="entry name" value="Thioredoxin-like_fold"/>
</dbReference>
<dbReference type="InterPro" id="IPR036249">
    <property type="entry name" value="Thioredoxin-like_sf"/>
</dbReference>
<dbReference type="NCBIfam" id="TIGR03140">
    <property type="entry name" value="AhpF"/>
    <property type="match status" value="1"/>
</dbReference>
<dbReference type="PANTHER" id="PTHR48105">
    <property type="entry name" value="THIOREDOXIN REDUCTASE 1-RELATED-RELATED"/>
    <property type="match status" value="1"/>
</dbReference>
<dbReference type="Pfam" id="PF07992">
    <property type="entry name" value="Pyr_redox_2"/>
    <property type="match status" value="1"/>
</dbReference>
<dbReference type="Pfam" id="PF13192">
    <property type="entry name" value="Thioredoxin_3"/>
    <property type="match status" value="1"/>
</dbReference>
<dbReference type="PIRSF" id="PIRSF000238">
    <property type="entry name" value="AhpF"/>
    <property type="match status" value="1"/>
</dbReference>
<dbReference type="PRINTS" id="PR00368">
    <property type="entry name" value="FADPNR"/>
</dbReference>
<dbReference type="PRINTS" id="PR00469">
    <property type="entry name" value="PNDRDTASEII"/>
</dbReference>
<dbReference type="SUPFAM" id="SSF51905">
    <property type="entry name" value="FAD/NAD(P)-binding domain"/>
    <property type="match status" value="1"/>
</dbReference>
<dbReference type="SUPFAM" id="SSF52833">
    <property type="entry name" value="Thioredoxin-like"/>
    <property type="match status" value="2"/>
</dbReference>
<dbReference type="PROSITE" id="PS51354">
    <property type="entry name" value="GLUTAREDOXIN_2"/>
    <property type="match status" value="1"/>
</dbReference>
<dbReference type="PROSITE" id="PS00573">
    <property type="entry name" value="PYRIDINE_REDOX_2"/>
    <property type="match status" value="1"/>
</dbReference>
<gene>
    <name type="primary">ahpF</name>
    <name type="ordered locus">SAS0357</name>
</gene>
<reference key="1">
    <citation type="journal article" date="2004" name="Proc. Natl. Acad. Sci. U.S.A.">
        <title>Complete genomes of two clinical Staphylococcus aureus strains: evidence for the rapid evolution of virulence and drug resistance.</title>
        <authorList>
            <person name="Holden M.T.G."/>
            <person name="Feil E.J."/>
            <person name="Lindsay J.A."/>
            <person name="Peacock S.J."/>
            <person name="Day N.P.J."/>
            <person name="Enright M.C."/>
            <person name="Foster T.J."/>
            <person name="Moore C.E."/>
            <person name="Hurst L."/>
            <person name="Atkin R."/>
            <person name="Barron A."/>
            <person name="Bason N."/>
            <person name="Bentley S.D."/>
            <person name="Chillingworth C."/>
            <person name="Chillingworth T."/>
            <person name="Churcher C."/>
            <person name="Clark L."/>
            <person name="Corton C."/>
            <person name="Cronin A."/>
            <person name="Doggett J."/>
            <person name="Dowd L."/>
            <person name="Feltwell T."/>
            <person name="Hance Z."/>
            <person name="Harris B."/>
            <person name="Hauser H."/>
            <person name="Holroyd S."/>
            <person name="Jagels K."/>
            <person name="James K.D."/>
            <person name="Lennard N."/>
            <person name="Line A."/>
            <person name="Mayes R."/>
            <person name="Moule S."/>
            <person name="Mungall K."/>
            <person name="Ormond D."/>
            <person name="Quail M.A."/>
            <person name="Rabbinowitsch E."/>
            <person name="Rutherford K.M."/>
            <person name="Sanders M."/>
            <person name="Sharp S."/>
            <person name="Simmonds M."/>
            <person name="Stevens K."/>
            <person name="Whitehead S."/>
            <person name="Barrell B.G."/>
            <person name="Spratt B.G."/>
            <person name="Parkhill J."/>
        </authorList>
    </citation>
    <scope>NUCLEOTIDE SEQUENCE [LARGE SCALE GENOMIC DNA]</scope>
    <source>
        <strain>MSSA476</strain>
    </source>
</reference>